<geneLocation type="chloroplast"/>
<name>YCX5_CHLVU</name>
<dbReference type="EMBL" id="AB001684">
    <property type="protein sequence ID" value="BAA57892.1"/>
    <property type="molecule type" value="Genomic_DNA"/>
</dbReference>
<dbReference type="PIR" id="T07245">
    <property type="entry name" value="T07245"/>
</dbReference>
<dbReference type="RefSeq" id="NP_045817.1">
    <property type="nucleotide sequence ID" value="NC_001865.1"/>
</dbReference>
<dbReference type="GeneID" id="1457421"/>
<dbReference type="GO" id="GO:0009507">
    <property type="term" value="C:chloroplast"/>
    <property type="evidence" value="ECO:0007669"/>
    <property type="project" value="UniProtKB-SubCell"/>
</dbReference>
<organism>
    <name type="scientific">Chlorella vulgaris</name>
    <name type="common">Green alga</name>
    <dbReference type="NCBI Taxonomy" id="3077"/>
    <lineage>
        <taxon>Eukaryota</taxon>
        <taxon>Viridiplantae</taxon>
        <taxon>Chlorophyta</taxon>
        <taxon>core chlorophytes</taxon>
        <taxon>Trebouxiophyceae</taxon>
        <taxon>Chlorellales</taxon>
        <taxon>Chlorellaceae</taxon>
        <taxon>Chlorella clade</taxon>
        <taxon>Chlorella</taxon>
    </lineage>
</organism>
<keyword id="KW-0150">Chloroplast</keyword>
<keyword id="KW-0934">Plastid</keyword>
<feature type="chain" id="PRO_0000217513" description="Uncharacterized 15.7 kDa protein in ycf4-trnK intergenic region">
    <location>
        <begin position="1"/>
        <end position="131"/>
    </location>
</feature>
<proteinExistence type="predicted"/>
<reference key="1">
    <citation type="journal article" date="1997" name="Proc. Natl. Acad. Sci. U.S.A.">
        <title>Complete nucleotide sequence of the chloroplast genome from the green alga Chlorella vulgaris: the existence of genes possibly involved in chloroplast division.</title>
        <authorList>
            <person name="Wakasugi T."/>
            <person name="Nagai T."/>
            <person name="Kapoor M."/>
            <person name="Sugita M."/>
            <person name="Ito M."/>
            <person name="Ito S."/>
            <person name="Tsudzuki J."/>
            <person name="Nakashima K."/>
            <person name="Tsudzuki T."/>
            <person name="Suzuki Y."/>
            <person name="Hamada A."/>
            <person name="Ohta T."/>
            <person name="Inamura A."/>
            <person name="Yoshinaga K."/>
            <person name="Sugiura M."/>
        </authorList>
    </citation>
    <scope>NUCLEOTIDE SEQUENCE [LARGE SCALE GENOMIC DNA]</scope>
    <source>
        <strain>IAM C-27 / Tamiya</strain>
    </source>
</reference>
<comment type="subcellular location">
    <subcellularLocation>
        <location>Plastid</location>
        <location>Chloroplast</location>
    </subcellularLocation>
</comment>
<protein>
    <recommendedName>
        <fullName>Uncharacterized 15.7 kDa protein in ycf4-trnK intergenic region</fullName>
    </recommendedName>
    <alternativeName>
        <fullName>ORF131</fullName>
    </alternativeName>
</protein>
<sequence length="131" mass="15745">MTHRFRNTTFMRYLSNSRFKKKLILRKIKVSGPFVIQRTVHPQSAHNPNENCGNFDQRKVLGYFFKMFFYHNYNFVFTKLKLICLFLIISISSKKNFKLKVLILFFSIQKFTKSLDRNMSLAFDCTHKRVT</sequence>
<accession>O20142</accession>